<sequence length="461" mass="50522">MDQSSRYANLNLKESDLIAGGRHVLCAYIMKPKDGFGNFLQTAAHFSAESSTGTNVEVSTTDDFTRGVDALVYEIDEANNVMKIAYPIELFDRNVIDGRAMIASFLTLTIGNNQGMGDVEYAKMHDFYVPPAYLRLFDGPSTTIRDLWRVLGRPVVDGGFIVGTIIKPKLGLRPQPFADACYDFWLGGDFIKNDEPQGNQVFAPFKETVRAVNEAMRRAQDKTGEPKLFSFNITADDHYEMVARGEYILETFADNADHVAFLVDGYVAGPAAVTTARRAFPKQYLHYHRAGHGAVTSPQSKRGYTAFVLSKMARLQGASGIHTGTMGFGKMEGEAADRAMAYMITEDSADGPFFHQEWLGMNPTTPIISGGMNALRMPGFFDNLGHSNLIMTAGGGAFGHIDGGAAGAKSLRQAEQCWKAGADPVEFAKDHREFARAFESFPHDADALYPNWRNSLKLAAA</sequence>
<comment type="function">
    <text evidence="1">RuBisCO catalyzes two reactions: the carboxylation of D-ribulose 1,5-bisphosphate, the primary event in carbon dioxide fixation, as well as the oxidative fragmentation of the pentose substrate. Both reactions occur simultaneously and in competition at the same active site.</text>
</comment>
<comment type="catalytic activity">
    <reaction evidence="1">
        <text>2 (2R)-3-phosphoglycerate + 2 H(+) = D-ribulose 1,5-bisphosphate + CO2 + H2O</text>
        <dbReference type="Rhea" id="RHEA:23124"/>
        <dbReference type="ChEBI" id="CHEBI:15377"/>
        <dbReference type="ChEBI" id="CHEBI:15378"/>
        <dbReference type="ChEBI" id="CHEBI:16526"/>
        <dbReference type="ChEBI" id="CHEBI:57870"/>
        <dbReference type="ChEBI" id="CHEBI:58272"/>
        <dbReference type="EC" id="4.1.1.39"/>
    </reaction>
</comment>
<comment type="catalytic activity">
    <reaction evidence="1">
        <text>D-ribulose 1,5-bisphosphate + O2 = 2-phosphoglycolate + (2R)-3-phosphoglycerate + 2 H(+)</text>
        <dbReference type="Rhea" id="RHEA:36631"/>
        <dbReference type="ChEBI" id="CHEBI:15378"/>
        <dbReference type="ChEBI" id="CHEBI:15379"/>
        <dbReference type="ChEBI" id="CHEBI:57870"/>
        <dbReference type="ChEBI" id="CHEBI:58033"/>
        <dbReference type="ChEBI" id="CHEBI:58272"/>
    </reaction>
</comment>
<comment type="cofactor">
    <cofactor evidence="1">
        <name>Mg(2+)</name>
        <dbReference type="ChEBI" id="CHEBI:18420"/>
    </cofactor>
    <text evidence="1">Binds 1 Mg(2+) ion per subunit.</text>
</comment>
<comment type="subunit">
    <text evidence="1">Homodimer.</text>
</comment>
<comment type="miscellaneous">
    <text evidence="1">The basic functional RuBisCO is composed of a large chain homodimer in a 'head-to-tail' conformation. In contrast to form I RuBisCO, the form II RuBisCO are composed solely of large subunits.</text>
</comment>
<comment type="similarity">
    <text evidence="1">Belongs to the RuBisCO large chain family. Type II subfamily.</text>
</comment>
<keyword id="KW-0113">Calvin cycle</keyword>
<keyword id="KW-0120">Carbon dioxide fixation</keyword>
<keyword id="KW-0456">Lyase</keyword>
<keyword id="KW-0460">Magnesium</keyword>
<keyword id="KW-0479">Metal-binding</keyword>
<keyword id="KW-0503">Monooxygenase</keyword>
<keyword id="KW-0560">Oxidoreductase</keyword>
<keyword id="KW-0602">Photosynthesis</keyword>
<keyword id="KW-1185">Reference proteome</keyword>
<name>RBL2_RHOP2</name>
<organism>
    <name type="scientific">Rhodopseudomonas palustris (strain HaA2)</name>
    <dbReference type="NCBI Taxonomy" id="316058"/>
    <lineage>
        <taxon>Bacteria</taxon>
        <taxon>Pseudomonadati</taxon>
        <taxon>Pseudomonadota</taxon>
        <taxon>Alphaproteobacteria</taxon>
        <taxon>Hyphomicrobiales</taxon>
        <taxon>Nitrobacteraceae</taxon>
        <taxon>Rhodopseudomonas</taxon>
    </lineage>
</organism>
<gene>
    <name evidence="1" type="primary">cbbM</name>
    <name type="ordered locus">RPB_0951</name>
</gene>
<reference key="1">
    <citation type="submission" date="2006-01" db="EMBL/GenBank/DDBJ databases">
        <title>Complete sequence of Rhodopseudomonas palustris HaA2.</title>
        <authorList>
            <consortium name="US DOE Joint Genome Institute"/>
            <person name="Copeland A."/>
            <person name="Lucas S."/>
            <person name="Lapidus A."/>
            <person name="Barry K."/>
            <person name="Detter J.C."/>
            <person name="Glavina T."/>
            <person name="Hammon N."/>
            <person name="Israni S."/>
            <person name="Pitluck S."/>
            <person name="Chain P."/>
            <person name="Malfatti S."/>
            <person name="Shin M."/>
            <person name="Vergez L."/>
            <person name="Schmutz J."/>
            <person name="Larimer F."/>
            <person name="Land M."/>
            <person name="Hauser L."/>
            <person name="Pelletier D.A."/>
            <person name="Kyrpides N."/>
            <person name="Anderson I."/>
            <person name="Oda Y."/>
            <person name="Harwood C.S."/>
            <person name="Richardson P."/>
        </authorList>
    </citation>
    <scope>NUCLEOTIDE SEQUENCE [LARGE SCALE GENOMIC DNA]</scope>
    <source>
        <strain>HaA2</strain>
    </source>
</reference>
<protein>
    <recommendedName>
        <fullName evidence="1">Ribulose bisphosphate carboxylase</fullName>
        <shortName evidence="1">RuBisCO</shortName>
        <ecNumber evidence="1">4.1.1.39</ecNumber>
    </recommendedName>
</protein>
<evidence type="ECO:0000255" key="1">
    <source>
        <dbReference type="HAMAP-Rule" id="MF_01339"/>
    </source>
</evidence>
<accession>Q2J1J9</accession>
<proteinExistence type="inferred from homology"/>
<feature type="chain" id="PRO_0000251409" description="Ribulose bisphosphate carboxylase">
    <location>
        <begin position="1"/>
        <end position="461"/>
    </location>
</feature>
<feature type="active site" description="Proton acceptor" evidence="1">
    <location>
        <position position="167"/>
    </location>
</feature>
<feature type="active site" description="Proton acceptor" evidence="1">
    <location>
        <position position="288"/>
    </location>
</feature>
<feature type="binding site" description="in homodimeric partner" evidence="1">
    <location>
        <position position="112"/>
    </location>
    <ligand>
        <name>substrate</name>
    </ligand>
</feature>
<feature type="binding site" evidence="1">
    <location>
        <position position="169"/>
    </location>
    <ligand>
        <name>substrate</name>
    </ligand>
</feature>
<feature type="binding site" description="via carbamate group" evidence="1">
    <location>
        <position position="192"/>
    </location>
    <ligand>
        <name>Mg(2+)</name>
        <dbReference type="ChEBI" id="CHEBI:18420"/>
    </ligand>
</feature>
<feature type="binding site" evidence="1">
    <location>
        <position position="194"/>
    </location>
    <ligand>
        <name>Mg(2+)</name>
        <dbReference type="ChEBI" id="CHEBI:18420"/>
    </ligand>
</feature>
<feature type="binding site" evidence="1">
    <location>
        <position position="195"/>
    </location>
    <ligand>
        <name>Mg(2+)</name>
        <dbReference type="ChEBI" id="CHEBI:18420"/>
    </ligand>
</feature>
<feature type="binding site" evidence="1">
    <location>
        <position position="289"/>
    </location>
    <ligand>
        <name>substrate</name>
    </ligand>
</feature>
<feature type="binding site" evidence="1">
    <location>
        <position position="322"/>
    </location>
    <ligand>
        <name>substrate</name>
    </ligand>
</feature>
<feature type="binding site" evidence="1">
    <location>
        <position position="369"/>
    </location>
    <ligand>
        <name>substrate</name>
    </ligand>
</feature>
<feature type="site" description="Transition state stabilizer" evidence="1">
    <location>
        <position position="330"/>
    </location>
</feature>
<feature type="modified residue" description="N6-carboxylysine" evidence="1">
    <location>
        <position position="192"/>
    </location>
</feature>
<dbReference type="EC" id="4.1.1.39" evidence="1"/>
<dbReference type="EMBL" id="CP000250">
    <property type="protein sequence ID" value="ABD05661.1"/>
    <property type="molecule type" value="Genomic_DNA"/>
</dbReference>
<dbReference type="RefSeq" id="WP_011439850.1">
    <property type="nucleotide sequence ID" value="NC_007778.1"/>
</dbReference>
<dbReference type="SMR" id="Q2J1J9"/>
<dbReference type="STRING" id="316058.RPB_0951"/>
<dbReference type="KEGG" id="rpb:RPB_0951"/>
<dbReference type="eggNOG" id="COG1850">
    <property type="taxonomic scope" value="Bacteria"/>
</dbReference>
<dbReference type="HOGENOM" id="CLU_031450_3_1_5"/>
<dbReference type="OrthoDB" id="9764279at2"/>
<dbReference type="Proteomes" id="UP000008809">
    <property type="component" value="Chromosome"/>
</dbReference>
<dbReference type="GO" id="GO:0000287">
    <property type="term" value="F:magnesium ion binding"/>
    <property type="evidence" value="ECO:0007669"/>
    <property type="project" value="UniProtKB-UniRule"/>
</dbReference>
<dbReference type="GO" id="GO:0004497">
    <property type="term" value="F:monooxygenase activity"/>
    <property type="evidence" value="ECO:0007669"/>
    <property type="project" value="UniProtKB-KW"/>
</dbReference>
<dbReference type="GO" id="GO:0016984">
    <property type="term" value="F:ribulose-bisphosphate carboxylase activity"/>
    <property type="evidence" value="ECO:0007669"/>
    <property type="project" value="UniProtKB-UniRule"/>
</dbReference>
<dbReference type="GO" id="GO:0019253">
    <property type="term" value="P:reductive pentose-phosphate cycle"/>
    <property type="evidence" value="ECO:0007669"/>
    <property type="project" value="UniProtKB-KW"/>
</dbReference>
<dbReference type="CDD" id="cd08211">
    <property type="entry name" value="RuBisCO_large_II"/>
    <property type="match status" value="1"/>
</dbReference>
<dbReference type="Gene3D" id="3.20.20.110">
    <property type="entry name" value="Ribulose bisphosphate carboxylase, large subunit, C-terminal domain"/>
    <property type="match status" value="1"/>
</dbReference>
<dbReference type="Gene3D" id="3.30.70.150">
    <property type="entry name" value="RuBisCO large subunit, N-terminal domain"/>
    <property type="match status" value="1"/>
</dbReference>
<dbReference type="HAMAP" id="MF_01339">
    <property type="entry name" value="RuBisCO_L_type2"/>
    <property type="match status" value="1"/>
</dbReference>
<dbReference type="InterPro" id="IPR033966">
    <property type="entry name" value="RuBisCO"/>
</dbReference>
<dbReference type="InterPro" id="IPR020878">
    <property type="entry name" value="RuBisCo_large_chain_AS"/>
</dbReference>
<dbReference type="InterPro" id="IPR000685">
    <property type="entry name" value="RuBisCO_lsu_C"/>
</dbReference>
<dbReference type="InterPro" id="IPR036376">
    <property type="entry name" value="RuBisCO_lsu_C_sf"/>
</dbReference>
<dbReference type="InterPro" id="IPR017443">
    <property type="entry name" value="RuBisCO_lsu_fd_N"/>
</dbReference>
<dbReference type="InterPro" id="IPR036422">
    <property type="entry name" value="RuBisCO_lsu_N_sf"/>
</dbReference>
<dbReference type="InterPro" id="IPR020871">
    <property type="entry name" value="RuBisCO_lsuII"/>
</dbReference>
<dbReference type="NCBIfam" id="NF010002">
    <property type="entry name" value="PRK13475.1"/>
    <property type="match status" value="1"/>
</dbReference>
<dbReference type="PANTHER" id="PTHR42704">
    <property type="entry name" value="RIBULOSE BISPHOSPHATE CARBOXYLASE"/>
    <property type="match status" value="1"/>
</dbReference>
<dbReference type="PANTHER" id="PTHR42704:SF17">
    <property type="entry name" value="RIBULOSE BISPHOSPHATE CARBOXYLASE LARGE CHAIN"/>
    <property type="match status" value="1"/>
</dbReference>
<dbReference type="Pfam" id="PF00016">
    <property type="entry name" value="RuBisCO_large"/>
    <property type="match status" value="1"/>
</dbReference>
<dbReference type="Pfam" id="PF02788">
    <property type="entry name" value="RuBisCO_large_N"/>
    <property type="match status" value="1"/>
</dbReference>
<dbReference type="SFLD" id="SFLDS00014">
    <property type="entry name" value="RuBisCO"/>
    <property type="match status" value="1"/>
</dbReference>
<dbReference type="SFLD" id="SFLDG00301">
    <property type="entry name" value="RuBisCO-like_proteins"/>
    <property type="match status" value="1"/>
</dbReference>
<dbReference type="SUPFAM" id="SSF51649">
    <property type="entry name" value="RuBisCo, C-terminal domain"/>
    <property type="match status" value="1"/>
</dbReference>
<dbReference type="SUPFAM" id="SSF54966">
    <property type="entry name" value="RuBisCO, large subunit, small (N-terminal) domain"/>
    <property type="match status" value="1"/>
</dbReference>
<dbReference type="PROSITE" id="PS00157">
    <property type="entry name" value="RUBISCO_LARGE"/>
    <property type="match status" value="1"/>
</dbReference>